<name>PLSY_STRR6</name>
<dbReference type="EC" id="2.3.1.275" evidence="3"/>
<dbReference type="EMBL" id="AE007317">
    <property type="protein sequence ID" value="AAK99559.1"/>
    <property type="molecule type" value="Genomic_DNA"/>
</dbReference>
<dbReference type="PIR" id="C97966">
    <property type="entry name" value="C97966"/>
</dbReference>
<dbReference type="RefSeq" id="NP_358349.1">
    <property type="nucleotide sequence ID" value="NC_003098.1"/>
</dbReference>
<dbReference type="RefSeq" id="WP_000628789.1">
    <property type="nucleotide sequence ID" value="NC_003098.1"/>
</dbReference>
<dbReference type="SMR" id="P0A4Q0"/>
<dbReference type="STRING" id="171101.spr0755"/>
<dbReference type="SwissLipids" id="SLP:000001798"/>
<dbReference type="GeneID" id="45653793"/>
<dbReference type="KEGG" id="spr:spr0755"/>
<dbReference type="PATRIC" id="fig|171101.6.peg.835"/>
<dbReference type="eggNOG" id="COG0344">
    <property type="taxonomic scope" value="Bacteria"/>
</dbReference>
<dbReference type="HOGENOM" id="CLU_081254_4_0_9"/>
<dbReference type="BioCyc" id="MetaCyc:MONOMER-14087"/>
<dbReference type="BRENDA" id="2.3.1.275">
    <property type="organism ID" value="1960"/>
</dbReference>
<dbReference type="SABIO-RK" id="P0A4Q0"/>
<dbReference type="UniPathway" id="UPA00085"/>
<dbReference type="Proteomes" id="UP000000586">
    <property type="component" value="Chromosome"/>
</dbReference>
<dbReference type="GO" id="GO:0005886">
    <property type="term" value="C:plasma membrane"/>
    <property type="evidence" value="ECO:0000318"/>
    <property type="project" value="GO_Central"/>
</dbReference>
<dbReference type="GO" id="GO:0043772">
    <property type="term" value="F:acyl-phosphate glycerol-3-phosphate acyltransferase activity"/>
    <property type="evidence" value="ECO:0007669"/>
    <property type="project" value="UniProtKB-UniRule"/>
</dbReference>
<dbReference type="GO" id="GO:0008654">
    <property type="term" value="P:phospholipid biosynthetic process"/>
    <property type="evidence" value="ECO:0007669"/>
    <property type="project" value="UniProtKB-UniRule"/>
</dbReference>
<dbReference type="HAMAP" id="MF_01043">
    <property type="entry name" value="PlsY"/>
    <property type="match status" value="1"/>
</dbReference>
<dbReference type="InterPro" id="IPR003811">
    <property type="entry name" value="G3P_acylTferase_PlsY"/>
</dbReference>
<dbReference type="NCBIfam" id="TIGR00023">
    <property type="entry name" value="glycerol-3-phosphate 1-O-acyltransferase PlsY"/>
    <property type="match status" value="1"/>
</dbReference>
<dbReference type="PANTHER" id="PTHR30309:SF0">
    <property type="entry name" value="GLYCEROL-3-PHOSPHATE ACYLTRANSFERASE-RELATED"/>
    <property type="match status" value="1"/>
</dbReference>
<dbReference type="PANTHER" id="PTHR30309">
    <property type="entry name" value="INNER MEMBRANE PROTEIN YGIH"/>
    <property type="match status" value="1"/>
</dbReference>
<dbReference type="Pfam" id="PF02660">
    <property type="entry name" value="G3P_acyltransf"/>
    <property type="match status" value="1"/>
</dbReference>
<dbReference type="SMART" id="SM01207">
    <property type="entry name" value="G3P_acyltransf"/>
    <property type="match status" value="1"/>
</dbReference>
<comment type="function">
    <text evidence="3">Catalyzes the transfer of an acyl group from acyl-phosphate (acyl-PO(4)) to glycerol-3-phosphate (G3P) to form lysophosphatidic acid (LPA). This enzyme utilizes acyl-phosphate as fatty acyl donor, but not acyl-CoA or acyl-ACP.</text>
</comment>
<comment type="catalytic activity">
    <reaction evidence="3">
        <text>an acyl phosphate + sn-glycerol 3-phosphate = a 1-acyl-sn-glycero-3-phosphate + phosphate</text>
        <dbReference type="Rhea" id="RHEA:34075"/>
        <dbReference type="ChEBI" id="CHEBI:43474"/>
        <dbReference type="ChEBI" id="CHEBI:57597"/>
        <dbReference type="ChEBI" id="CHEBI:57970"/>
        <dbReference type="ChEBI" id="CHEBI:59918"/>
        <dbReference type="EC" id="2.3.1.275"/>
    </reaction>
</comment>
<comment type="catalytic activity">
    <reaction evidence="3">
        <text>hexadecanoyl phosphate + sn-glycerol 3-phosphate = 1-hexadecanoyl-sn-glycero-3-phosphate + phosphate</text>
        <dbReference type="Rhea" id="RHEA:54968"/>
        <dbReference type="ChEBI" id="CHEBI:43474"/>
        <dbReference type="ChEBI" id="CHEBI:57518"/>
        <dbReference type="ChEBI" id="CHEBI:57597"/>
        <dbReference type="ChEBI" id="CHEBI:138436"/>
    </reaction>
    <physiologicalReaction direction="left-to-right" evidence="3">
        <dbReference type="Rhea" id="RHEA:54969"/>
    </physiologicalReaction>
</comment>
<comment type="activity regulation">
    <text evidence="3 4">Inhibited by acyl-CoA and 1-acylglycerol-3-phosphate.</text>
</comment>
<comment type="biophysicochemical properties">
    <kinetics>
        <KM evidence="4">100 uM for glycerol-3-phosphate (at 37 degrees Celsius and at pH 7.4)</KM>
        <KM evidence="4">30 uM for acyl-phosphate (at 37 degrees Celsius and at pH 7.4)</KM>
    </kinetics>
    <phDependence>
        <text evidence="4">Optimum pH is 7.4.</text>
    </phDependence>
</comment>
<comment type="pathway">
    <text>Lipid metabolism; phospholipid metabolism.</text>
</comment>
<comment type="subunit">
    <text evidence="1">Probably interacts with PlsX.</text>
</comment>
<comment type="subcellular location">
    <subcellularLocation>
        <location>Cell membrane</location>
        <topology>Multi-pass membrane protein</topology>
    </subcellularLocation>
</comment>
<comment type="similarity">
    <text evidence="5">Belongs to the PlsY family.</text>
</comment>
<gene>
    <name type="primary">plsY</name>
    <name type="ordered locus">spr0755</name>
</gene>
<evidence type="ECO:0000250" key="1"/>
<evidence type="ECO:0000255" key="2"/>
<evidence type="ECO:0000269" key="3">
    <source>
    </source>
</evidence>
<evidence type="ECO:0000269" key="4">
    <source>
    </source>
</evidence>
<evidence type="ECO:0000305" key="5"/>
<sequence>MITIVLLILAYLLGSIPSGLWIGQVFFQINLREHGSGNTGTTNTFRILGKKAGMATFVIDFFKGTLATLLPIIFHLQGVSPLIFGLLAVIGHTFPIFAGFKGGKAVATSAGVIFGFAPIFCLYLAIIFFGALYLGSMISLSSVTASIAAVIGVLLFPLFGFILSNYDSLFIAIILALASLIIIRHKDNIARIKNKTENLVPWGLNLTHQDPKK</sequence>
<proteinExistence type="evidence at protein level"/>
<accession>P0A4Q0</accession>
<accession>Q54916</accession>
<keyword id="KW-1003">Cell membrane</keyword>
<keyword id="KW-0444">Lipid biosynthesis</keyword>
<keyword id="KW-0443">Lipid metabolism</keyword>
<keyword id="KW-0472">Membrane</keyword>
<keyword id="KW-0594">Phospholipid biosynthesis</keyword>
<keyword id="KW-1208">Phospholipid metabolism</keyword>
<keyword id="KW-1185">Reference proteome</keyword>
<keyword id="KW-0808">Transferase</keyword>
<keyword id="KW-0812">Transmembrane</keyword>
<keyword id="KW-1133">Transmembrane helix</keyword>
<feature type="chain" id="PRO_0000188465" description="Glycerol-3-phosphate acyltransferase">
    <location>
        <begin position="1"/>
        <end position="213"/>
    </location>
</feature>
<feature type="topological domain" description="Extracellular" evidence="2">
    <location>
        <begin position="1"/>
        <end position="3"/>
    </location>
</feature>
<feature type="transmembrane region" description="Helical" evidence="2">
    <location>
        <begin position="4"/>
        <end position="22"/>
    </location>
</feature>
<feature type="topological domain" description="Cytoplasmic" evidence="2">
    <location>
        <begin position="23"/>
        <end position="51"/>
    </location>
</feature>
<feature type="transmembrane region" description="Helical" evidence="2">
    <location>
        <begin position="52"/>
        <end position="74"/>
    </location>
</feature>
<feature type="topological domain" description="Extracellular" evidence="2">
    <location>
        <begin position="75"/>
        <end position="80"/>
    </location>
</feature>
<feature type="transmembrane region" description="Helical" evidence="2">
    <location>
        <begin position="81"/>
        <end position="100"/>
    </location>
</feature>
<feature type="topological domain" description="Cytoplasmic" evidence="2">
    <location>
        <begin position="101"/>
        <end position="142"/>
    </location>
</feature>
<feature type="transmembrane region" description="Helical" evidence="2">
    <location>
        <begin position="143"/>
        <end position="161"/>
    </location>
</feature>
<feature type="topological domain" description="Extracellular" evidence="2">
    <location>
        <position position="162"/>
    </location>
</feature>
<feature type="transmembrane region" description="Helical" evidence="2">
    <location>
        <begin position="163"/>
        <end position="184"/>
    </location>
</feature>
<feature type="topological domain" description="Cytoplasmic" evidence="2">
    <location>
        <begin position="185"/>
        <end position="213"/>
    </location>
</feature>
<feature type="mutagenesis site" description="Loss of acyltransferase activity." evidence="4">
    <original>S</original>
    <variation>A</variation>
    <location>
        <position position="36"/>
    </location>
</feature>
<feature type="mutagenesis site" description="5% of wild-type activity." evidence="4">
    <original>N</original>
    <variation>A</variation>
    <location>
        <position position="43"/>
    </location>
</feature>
<feature type="mutagenesis site" description="Loss of acyltransferase activity." evidence="4">
    <original>R</original>
    <variation>A</variation>
    <location>
        <position position="46"/>
    </location>
</feature>
<feature type="mutagenesis site" description="Defect in substrate binding." evidence="4">
    <original>G</original>
    <variation>A</variation>
    <location>
        <position position="102"/>
    </location>
</feature>
<feature type="mutagenesis site" description="Defect in substrate binding." evidence="4">
    <original>G</original>
    <variation>A</variation>
    <location>
        <position position="103"/>
    </location>
</feature>
<feature type="mutagenesis site" description="Loss of acyltransferase activity." evidence="4">
    <original>K</original>
    <variation>A</variation>
    <location>
        <position position="104"/>
    </location>
</feature>
<feature type="mutagenesis site" description="0.6% of wild-type activity." evidence="4">
    <original>H</original>
    <variation>A</variation>
    <location>
        <position position="185"/>
    </location>
</feature>
<feature type="mutagenesis site" description="Loss of acyltransferase activity." evidence="4">
    <original>N</original>
    <variation>A</variation>
    <location>
        <position position="188"/>
    </location>
</feature>
<protein>
    <recommendedName>
        <fullName>Glycerol-3-phosphate acyltransferase</fullName>
    </recommendedName>
    <alternativeName>
        <fullName>Acyl-PO4 G3P acyltransferase</fullName>
    </alternativeName>
    <alternativeName>
        <fullName>Acyl-phosphate--glycerol-3-phosphate acyltransferase</fullName>
    </alternativeName>
    <alternativeName>
        <fullName>G3P acyltransferase</fullName>
        <shortName>GPAT</shortName>
        <ecNumber evidence="3">2.3.1.275</ecNumber>
    </alternativeName>
    <alternativeName>
        <fullName>Lysophosphatidic acid synthase</fullName>
        <shortName>LPA synthase</shortName>
    </alternativeName>
</protein>
<organism>
    <name type="scientific">Streptococcus pneumoniae (strain ATCC BAA-255 / R6)</name>
    <dbReference type="NCBI Taxonomy" id="171101"/>
    <lineage>
        <taxon>Bacteria</taxon>
        <taxon>Bacillati</taxon>
        <taxon>Bacillota</taxon>
        <taxon>Bacilli</taxon>
        <taxon>Lactobacillales</taxon>
        <taxon>Streptococcaceae</taxon>
        <taxon>Streptococcus</taxon>
    </lineage>
</organism>
<reference key="1">
    <citation type="journal article" date="2001" name="J. Bacteriol.">
        <title>Genome of the bacterium Streptococcus pneumoniae strain R6.</title>
        <authorList>
            <person name="Hoskins J."/>
            <person name="Alborn W.E. Jr."/>
            <person name="Arnold J."/>
            <person name="Blaszczak L.C."/>
            <person name="Burgett S."/>
            <person name="DeHoff B.S."/>
            <person name="Estrem S.T."/>
            <person name="Fritz L."/>
            <person name="Fu D.-J."/>
            <person name="Fuller W."/>
            <person name="Geringer C."/>
            <person name="Gilmour R."/>
            <person name="Glass J.S."/>
            <person name="Khoja H."/>
            <person name="Kraft A.R."/>
            <person name="Lagace R.E."/>
            <person name="LeBlanc D.J."/>
            <person name="Lee L.N."/>
            <person name="Lefkowitz E.J."/>
            <person name="Lu J."/>
            <person name="Matsushima P."/>
            <person name="McAhren S.M."/>
            <person name="McHenney M."/>
            <person name="McLeaster K."/>
            <person name="Mundy C.W."/>
            <person name="Nicas T.I."/>
            <person name="Norris F.H."/>
            <person name="O'Gara M."/>
            <person name="Peery R.B."/>
            <person name="Robertson G.T."/>
            <person name="Rockey P."/>
            <person name="Sun P.-M."/>
            <person name="Winkler M.E."/>
            <person name="Yang Y."/>
            <person name="Young-Bellido M."/>
            <person name="Zhao G."/>
            <person name="Zook C.A."/>
            <person name="Baltz R.H."/>
            <person name="Jaskunas S.R."/>
            <person name="Rosteck P.R. Jr."/>
            <person name="Skatrud P.L."/>
            <person name="Glass J.I."/>
        </authorList>
    </citation>
    <scope>NUCLEOTIDE SEQUENCE [LARGE SCALE GENOMIC DNA]</scope>
    <source>
        <strain>ATCC BAA-255 / R6</strain>
    </source>
</reference>
<reference key="2">
    <citation type="journal article" date="2006" name="Mol. Cell">
        <title>Acyl-phosphates initiate membrane phospholipid synthesis in Gram-positive pathogens.</title>
        <authorList>
            <person name="Lu Y.-J."/>
            <person name="Zhang Y.-M."/>
            <person name="Grimes K.D."/>
            <person name="Qi J."/>
            <person name="Lee R.E."/>
            <person name="Rock C.O."/>
        </authorList>
    </citation>
    <scope>FUNCTION</scope>
    <scope>CATALYTIC ACTIVITY</scope>
    <scope>ACTIVITY REGULATION</scope>
    <scope>NOMENCLATURE</scope>
</reference>
<reference key="3">
    <citation type="journal article" date="2007" name="J. Biol. Chem.">
        <title>Topology and active site of PlsY: the bacterial acylphosphate:glycerol-3-phosphate acyltransferase.</title>
        <authorList>
            <person name="Lu Y.-J."/>
            <person name="Zhang F."/>
            <person name="Grimes K.D."/>
            <person name="Lee R.E."/>
            <person name="Rock C.O."/>
        </authorList>
    </citation>
    <scope>TOPOLOGY</scope>
    <scope>MUTAGENESIS OF SER-36; ASN-43; ARG-46; GLY-102; GLY-103; LYS-104; HIS-185 AND ASN-188</scope>
    <scope>ACTIVITY REGULATION</scope>
    <scope>BIOPHYSICOCHEMICAL PROPERTIES</scope>
</reference>